<dbReference type="EMBL" id="CP000024">
    <property type="protein sequence ID" value="AAV63443.1"/>
    <property type="molecule type" value="Genomic_DNA"/>
</dbReference>
<dbReference type="RefSeq" id="WP_000533765.1">
    <property type="nucleotide sequence ID" value="NC_006449.1"/>
</dbReference>
<dbReference type="SMR" id="Q5LXR5"/>
<dbReference type="GeneID" id="98392396"/>
<dbReference type="KEGG" id="stc:str1930"/>
<dbReference type="HOGENOM" id="CLU_144911_0_1_9"/>
<dbReference type="GO" id="GO:0005737">
    <property type="term" value="C:cytoplasm"/>
    <property type="evidence" value="ECO:0007669"/>
    <property type="project" value="UniProtKB-ARBA"/>
</dbReference>
<dbReference type="GO" id="GO:0015935">
    <property type="term" value="C:small ribosomal subunit"/>
    <property type="evidence" value="ECO:0007669"/>
    <property type="project" value="InterPro"/>
</dbReference>
<dbReference type="GO" id="GO:0019843">
    <property type="term" value="F:rRNA binding"/>
    <property type="evidence" value="ECO:0007669"/>
    <property type="project" value="UniProtKB-UniRule"/>
</dbReference>
<dbReference type="GO" id="GO:0003735">
    <property type="term" value="F:structural constituent of ribosome"/>
    <property type="evidence" value="ECO:0007669"/>
    <property type="project" value="InterPro"/>
</dbReference>
<dbReference type="GO" id="GO:0000028">
    <property type="term" value="P:ribosomal small subunit assembly"/>
    <property type="evidence" value="ECO:0007669"/>
    <property type="project" value="TreeGrafter"/>
</dbReference>
<dbReference type="GO" id="GO:0006412">
    <property type="term" value="P:translation"/>
    <property type="evidence" value="ECO:0007669"/>
    <property type="project" value="UniProtKB-UniRule"/>
</dbReference>
<dbReference type="FunFam" id="3.30.860.10:FF:000001">
    <property type="entry name" value="30S ribosomal protein S19"/>
    <property type="match status" value="1"/>
</dbReference>
<dbReference type="Gene3D" id="3.30.860.10">
    <property type="entry name" value="30s Ribosomal Protein S19, Chain A"/>
    <property type="match status" value="1"/>
</dbReference>
<dbReference type="HAMAP" id="MF_00531">
    <property type="entry name" value="Ribosomal_uS19"/>
    <property type="match status" value="1"/>
</dbReference>
<dbReference type="InterPro" id="IPR002222">
    <property type="entry name" value="Ribosomal_uS19"/>
</dbReference>
<dbReference type="InterPro" id="IPR005732">
    <property type="entry name" value="Ribosomal_uS19_bac-type"/>
</dbReference>
<dbReference type="InterPro" id="IPR020934">
    <property type="entry name" value="Ribosomal_uS19_CS"/>
</dbReference>
<dbReference type="InterPro" id="IPR023575">
    <property type="entry name" value="Ribosomal_uS19_SF"/>
</dbReference>
<dbReference type="NCBIfam" id="TIGR01050">
    <property type="entry name" value="rpsS_bact"/>
    <property type="match status" value="1"/>
</dbReference>
<dbReference type="PANTHER" id="PTHR11880">
    <property type="entry name" value="RIBOSOMAL PROTEIN S19P FAMILY MEMBER"/>
    <property type="match status" value="1"/>
</dbReference>
<dbReference type="PANTHER" id="PTHR11880:SF8">
    <property type="entry name" value="SMALL RIBOSOMAL SUBUNIT PROTEIN US19M"/>
    <property type="match status" value="1"/>
</dbReference>
<dbReference type="Pfam" id="PF00203">
    <property type="entry name" value="Ribosomal_S19"/>
    <property type="match status" value="1"/>
</dbReference>
<dbReference type="PIRSF" id="PIRSF002144">
    <property type="entry name" value="Ribosomal_S19"/>
    <property type="match status" value="1"/>
</dbReference>
<dbReference type="PRINTS" id="PR00975">
    <property type="entry name" value="RIBOSOMALS19"/>
</dbReference>
<dbReference type="SUPFAM" id="SSF54570">
    <property type="entry name" value="Ribosomal protein S19"/>
    <property type="match status" value="1"/>
</dbReference>
<dbReference type="PROSITE" id="PS00323">
    <property type="entry name" value="RIBOSOMAL_S19"/>
    <property type="match status" value="1"/>
</dbReference>
<feature type="chain" id="PRO_0000265448" description="Small ribosomal subunit protein uS19">
    <location>
        <begin position="1"/>
        <end position="92"/>
    </location>
</feature>
<evidence type="ECO:0000255" key="1">
    <source>
        <dbReference type="HAMAP-Rule" id="MF_00531"/>
    </source>
</evidence>
<evidence type="ECO:0000305" key="2"/>
<comment type="function">
    <text evidence="1">Protein S19 forms a complex with S13 that binds strongly to the 16S ribosomal RNA.</text>
</comment>
<comment type="similarity">
    <text evidence="1">Belongs to the universal ribosomal protein uS19 family.</text>
</comment>
<accession>Q5LXR5</accession>
<sequence length="92" mass="10622">MGRSLKKGPFVDEHLMKKVEAQANDEKKKVIKTWSRRSTIFPSFIGYTIAVYDGRKHVPVYIQEDMVGHKLGEFAPTRTYKGHAADDKKTRR</sequence>
<name>RS19_STRT1</name>
<keyword id="KW-0687">Ribonucleoprotein</keyword>
<keyword id="KW-0689">Ribosomal protein</keyword>
<keyword id="KW-0694">RNA-binding</keyword>
<keyword id="KW-0699">rRNA-binding</keyword>
<reference key="1">
    <citation type="journal article" date="2004" name="Nat. Biotechnol.">
        <title>Complete sequence and comparative genome analysis of the dairy bacterium Streptococcus thermophilus.</title>
        <authorList>
            <person name="Bolotin A."/>
            <person name="Quinquis B."/>
            <person name="Renault P."/>
            <person name="Sorokin A."/>
            <person name="Ehrlich S.D."/>
            <person name="Kulakauskas S."/>
            <person name="Lapidus A."/>
            <person name="Goltsman E."/>
            <person name="Mazur M."/>
            <person name="Pusch G.D."/>
            <person name="Fonstein M."/>
            <person name="Overbeek R."/>
            <person name="Kyprides N."/>
            <person name="Purnelle B."/>
            <person name="Prozzi D."/>
            <person name="Ngui K."/>
            <person name="Masuy D."/>
            <person name="Hancy F."/>
            <person name="Burteau S."/>
            <person name="Boutry M."/>
            <person name="Delcour J."/>
            <person name="Goffeau A."/>
            <person name="Hols P."/>
        </authorList>
    </citation>
    <scope>NUCLEOTIDE SEQUENCE [LARGE SCALE GENOMIC DNA]</scope>
    <source>
        <strain>CNRZ 1066</strain>
    </source>
</reference>
<protein>
    <recommendedName>
        <fullName evidence="1">Small ribosomal subunit protein uS19</fullName>
    </recommendedName>
    <alternativeName>
        <fullName evidence="2">30S ribosomal protein S19</fullName>
    </alternativeName>
</protein>
<proteinExistence type="inferred from homology"/>
<organism>
    <name type="scientific">Streptococcus thermophilus (strain CNRZ 1066)</name>
    <dbReference type="NCBI Taxonomy" id="299768"/>
    <lineage>
        <taxon>Bacteria</taxon>
        <taxon>Bacillati</taxon>
        <taxon>Bacillota</taxon>
        <taxon>Bacilli</taxon>
        <taxon>Lactobacillales</taxon>
        <taxon>Streptococcaceae</taxon>
        <taxon>Streptococcus</taxon>
    </lineage>
</organism>
<gene>
    <name evidence="1" type="primary">rpsS</name>
    <name type="ordered locus">str1930</name>
</gene>